<comment type="function">
    <text evidence="1">Required for pantothenic acid biosynthesis.</text>
</comment>
<comment type="catalytic activity">
    <reaction>
        <text>(R)-pantoate + beta-alanine + ATP = (R)-pantothenate + AMP + diphosphate + H(+)</text>
        <dbReference type="Rhea" id="RHEA:10912"/>
        <dbReference type="ChEBI" id="CHEBI:15378"/>
        <dbReference type="ChEBI" id="CHEBI:15980"/>
        <dbReference type="ChEBI" id="CHEBI:29032"/>
        <dbReference type="ChEBI" id="CHEBI:30616"/>
        <dbReference type="ChEBI" id="CHEBI:33019"/>
        <dbReference type="ChEBI" id="CHEBI:57966"/>
        <dbReference type="ChEBI" id="CHEBI:456215"/>
        <dbReference type="EC" id="6.3.2.1"/>
    </reaction>
</comment>
<comment type="pathway">
    <text>Cofactor biosynthesis; (R)-pantothenate biosynthesis; (R)-pantothenate from (R)-pantoate and beta-alanine: step 1/1.</text>
</comment>
<comment type="subcellular location">
    <subcellularLocation>
        <location evidence="2">Cytoplasm</location>
    </subcellularLocation>
    <subcellularLocation>
        <location evidence="2">Nucleus</location>
    </subcellularLocation>
</comment>
<comment type="miscellaneous">
    <text evidence="3">Present with 2400 molecules/cell in log phase SD medium.</text>
</comment>
<comment type="similarity">
    <text evidence="4">Belongs to the pantothenate synthetase family.</text>
</comment>
<comment type="sequence caution" evidence="4">
    <conflict type="erroneous initiation">
        <sequence resource="EMBL-CDS" id="CAA86133"/>
    </conflict>
</comment>
<keyword id="KW-0067">ATP-binding</keyword>
<keyword id="KW-0963">Cytoplasm</keyword>
<keyword id="KW-0436">Ligase</keyword>
<keyword id="KW-0547">Nucleotide-binding</keyword>
<keyword id="KW-0539">Nucleus</keyword>
<keyword id="KW-0566">Pantothenate biosynthesis</keyword>
<keyword id="KW-1185">Reference proteome</keyword>
<protein>
    <recommendedName>
        <fullName>Pantoate--beta-alanine ligase</fullName>
        <ecNumber>6.3.2.1</ecNumber>
    </recommendedName>
    <alternativeName>
        <fullName>Pantoate-activating enzyme</fullName>
    </alternativeName>
    <alternativeName>
        <fullName>Pantothenate synthetase</fullName>
    </alternativeName>
</protein>
<proteinExistence type="evidence at protein level"/>
<organism>
    <name type="scientific">Saccharomyces cerevisiae (strain ATCC 204508 / S288c)</name>
    <name type="common">Baker's yeast</name>
    <dbReference type="NCBI Taxonomy" id="559292"/>
    <lineage>
        <taxon>Eukaryota</taxon>
        <taxon>Fungi</taxon>
        <taxon>Dikarya</taxon>
        <taxon>Ascomycota</taxon>
        <taxon>Saccharomycotina</taxon>
        <taxon>Saccharomycetes</taxon>
        <taxon>Saccharomycetales</taxon>
        <taxon>Saccharomycetaceae</taxon>
        <taxon>Saccharomyces</taxon>
    </lineage>
</organism>
<sequence length="309" mass="35032">MKIFHTVEEVVQWRTQELRETRFRETIGFVPTMGCLHSGHASLISQSVKENTYTVVSIFVNPSQFAPTEDLDNYPRTLPDDIKLLESLKVDVLFAPNAHVMYPQGIPLDIEEQKGPFVSVLGLSEKLEGKTRPNFFRGVATVVTKLFNIVMADVAYFGQKDIQQFIVLQCMVDELFVNTRLQMMPIVRNNNGLALSSRNKYLCPESLKISENLYRGLKAAENAIRRLAPGGRLSRSEIIDTVTQIWAPYVDSHDFKIDYVSLADFKTLDELSDVENTSEQQPIVISCAVYVTDREKPDTVVRLIDNIVI</sequence>
<dbReference type="EC" id="6.3.2.1"/>
<dbReference type="EMBL" id="Z38059">
    <property type="protein sequence ID" value="CAA86133.1"/>
    <property type="status" value="ALT_INIT"/>
    <property type="molecule type" value="Genomic_DNA"/>
</dbReference>
<dbReference type="EMBL" id="BK006942">
    <property type="protein sequence ID" value="DAA08408.1"/>
    <property type="molecule type" value="Genomic_DNA"/>
</dbReference>
<dbReference type="PIR" id="S48389">
    <property type="entry name" value="S48389"/>
</dbReference>
<dbReference type="RefSeq" id="NP_012121.2">
    <property type="nucleotide sequence ID" value="NM_001179493.1"/>
</dbReference>
<dbReference type="SMR" id="P40459"/>
<dbReference type="BioGRID" id="34847">
    <property type="interactions" value="106"/>
</dbReference>
<dbReference type="DIP" id="DIP-4613N"/>
<dbReference type="FunCoup" id="P40459">
    <property type="interactions" value="265"/>
</dbReference>
<dbReference type="IntAct" id="P40459">
    <property type="interactions" value="4"/>
</dbReference>
<dbReference type="STRING" id="4932.YIL145C"/>
<dbReference type="iPTMnet" id="P40459"/>
<dbReference type="PaxDb" id="4932-YIL145C"/>
<dbReference type="PeptideAtlas" id="P40459"/>
<dbReference type="EnsemblFungi" id="YIL145C_mRNA">
    <property type="protein sequence ID" value="YIL145C"/>
    <property type="gene ID" value="YIL145C"/>
</dbReference>
<dbReference type="GeneID" id="854661"/>
<dbReference type="KEGG" id="sce:YIL145C"/>
<dbReference type="AGR" id="SGD:S000001407"/>
<dbReference type="SGD" id="S000001407">
    <property type="gene designation" value="PAN6"/>
</dbReference>
<dbReference type="VEuPathDB" id="FungiDB:YIL145C"/>
<dbReference type="eggNOG" id="KOG3042">
    <property type="taxonomic scope" value="Eukaryota"/>
</dbReference>
<dbReference type="HOGENOM" id="CLU_047148_1_0_1"/>
<dbReference type="InParanoid" id="P40459"/>
<dbReference type="OMA" id="CNHKLEP"/>
<dbReference type="OrthoDB" id="2020436at2759"/>
<dbReference type="BioCyc" id="MetaCyc:YIL145C-MONOMER"/>
<dbReference type="BioCyc" id="YEAST:YIL145C-MONOMER"/>
<dbReference type="UniPathway" id="UPA00028">
    <property type="reaction ID" value="UER00005"/>
</dbReference>
<dbReference type="BioGRID-ORCS" id="854661">
    <property type="hits" value="0 hits in 10 CRISPR screens"/>
</dbReference>
<dbReference type="PRO" id="PR:P40459"/>
<dbReference type="Proteomes" id="UP000002311">
    <property type="component" value="Chromosome IX"/>
</dbReference>
<dbReference type="RNAct" id="P40459">
    <property type="molecule type" value="protein"/>
</dbReference>
<dbReference type="GO" id="GO:0005737">
    <property type="term" value="C:cytoplasm"/>
    <property type="evidence" value="ECO:0007005"/>
    <property type="project" value="SGD"/>
</dbReference>
<dbReference type="GO" id="GO:0005634">
    <property type="term" value="C:nucleus"/>
    <property type="evidence" value="ECO:0007005"/>
    <property type="project" value="SGD"/>
</dbReference>
<dbReference type="GO" id="GO:0005524">
    <property type="term" value="F:ATP binding"/>
    <property type="evidence" value="ECO:0007669"/>
    <property type="project" value="UniProtKB-KW"/>
</dbReference>
<dbReference type="GO" id="GO:0004592">
    <property type="term" value="F:pantoate-beta-alanine ligase activity"/>
    <property type="evidence" value="ECO:0000314"/>
    <property type="project" value="SGD"/>
</dbReference>
<dbReference type="GO" id="GO:0015940">
    <property type="term" value="P:pantothenate biosynthetic process"/>
    <property type="evidence" value="ECO:0000315"/>
    <property type="project" value="SGD"/>
</dbReference>
<dbReference type="CDD" id="cd00560">
    <property type="entry name" value="PanC"/>
    <property type="match status" value="1"/>
</dbReference>
<dbReference type="FunFam" id="3.30.1300.10:FF:000002">
    <property type="entry name" value="Pantoate--beta-alanine ligase"/>
    <property type="match status" value="1"/>
</dbReference>
<dbReference type="FunFam" id="3.40.50.620:FF:000013">
    <property type="entry name" value="Pantothenate synthetase"/>
    <property type="match status" value="1"/>
</dbReference>
<dbReference type="Gene3D" id="3.40.50.620">
    <property type="entry name" value="HUPs"/>
    <property type="match status" value="1"/>
</dbReference>
<dbReference type="Gene3D" id="3.30.1300.10">
    <property type="entry name" value="Pantoate-beta-alanine ligase, C-terminal domain"/>
    <property type="match status" value="1"/>
</dbReference>
<dbReference type="HAMAP" id="MF_00158">
    <property type="entry name" value="PanC"/>
    <property type="match status" value="1"/>
</dbReference>
<dbReference type="InterPro" id="IPR003721">
    <property type="entry name" value="Pantoate_ligase"/>
</dbReference>
<dbReference type="InterPro" id="IPR042176">
    <property type="entry name" value="Pantoate_ligase_C"/>
</dbReference>
<dbReference type="InterPro" id="IPR014729">
    <property type="entry name" value="Rossmann-like_a/b/a_fold"/>
</dbReference>
<dbReference type="NCBIfam" id="TIGR00018">
    <property type="entry name" value="panC"/>
    <property type="match status" value="1"/>
</dbReference>
<dbReference type="PANTHER" id="PTHR21299">
    <property type="entry name" value="CYTIDYLATE KINASE/PANTOATE-BETA-ALANINE LIGASE"/>
    <property type="match status" value="1"/>
</dbReference>
<dbReference type="PANTHER" id="PTHR21299:SF1">
    <property type="entry name" value="PANTOATE--BETA-ALANINE LIGASE"/>
    <property type="match status" value="1"/>
</dbReference>
<dbReference type="Pfam" id="PF02569">
    <property type="entry name" value="Pantoate_ligase"/>
    <property type="match status" value="1"/>
</dbReference>
<dbReference type="SUPFAM" id="SSF52374">
    <property type="entry name" value="Nucleotidylyl transferase"/>
    <property type="match status" value="1"/>
</dbReference>
<reference key="1">
    <citation type="journal article" date="1997" name="Nature">
        <title>The nucleotide sequence of Saccharomyces cerevisiae chromosome IX.</title>
        <authorList>
            <person name="Churcher C.M."/>
            <person name="Bowman S."/>
            <person name="Badcock K."/>
            <person name="Bankier A.T."/>
            <person name="Brown D."/>
            <person name="Chillingworth T."/>
            <person name="Connor R."/>
            <person name="Devlin K."/>
            <person name="Gentles S."/>
            <person name="Hamlin N."/>
            <person name="Harris D.E."/>
            <person name="Horsnell T."/>
            <person name="Hunt S."/>
            <person name="Jagels K."/>
            <person name="Jones M."/>
            <person name="Lye G."/>
            <person name="Moule S."/>
            <person name="Odell C."/>
            <person name="Pearson D."/>
            <person name="Rajandream M.A."/>
            <person name="Rice P."/>
            <person name="Rowley N."/>
            <person name="Skelton J."/>
            <person name="Smith V."/>
            <person name="Walsh S.V."/>
            <person name="Whitehead S."/>
            <person name="Barrell B.G."/>
        </authorList>
    </citation>
    <scope>NUCLEOTIDE SEQUENCE [LARGE SCALE GENOMIC DNA]</scope>
    <source>
        <strain>ATCC 204508 / S288c</strain>
    </source>
</reference>
<reference key="2">
    <citation type="journal article" date="2014" name="G3 (Bethesda)">
        <title>The reference genome sequence of Saccharomyces cerevisiae: Then and now.</title>
        <authorList>
            <person name="Engel S.R."/>
            <person name="Dietrich F.S."/>
            <person name="Fisk D.G."/>
            <person name="Binkley G."/>
            <person name="Balakrishnan R."/>
            <person name="Costanzo M.C."/>
            <person name="Dwight S.S."/>
            <person name="Hitz B.C."/>
            <person name="Karra K."/>
            <person name="Nash R.S."/>
            <person name="Weng S."/>
            <person name="Wong E.D."/>
            <person name="Lloyd P."/>
            <person name="Skrzypek M.S."/>
            <person name="Miyasato S.R."/>
            <person name="Simison M."/>
            <person name="Cherry J.M."/>
        </authorList>
    </citation>
    <scope>GENOME REANNOTATION</scope>
    <source>
        <strain>ATCC 204508 / S288c</strain>
    </source>
</reference>
<reference key="3">
    <citation type="journal article" date="2001" name="J. Biol. Chem.">
        <title>Saccharomyces cerevisiae is capable of de novo pantothenic acid biosynthesis involving a novel pathway of beta-alanine production from spermine.</title>
        <authorList>
            <person name="White W.H."/>
            <person name="Gunyuzlu P.L."/>
            <person name="Toyn J.H."/>
        </authorList>
    </citation>
    <scope>FUNCTION</scope>
</reference>
<reference key="4">
    <citation type="journal article" date="2003" name="Nature">
        <title>Sequencing and comparison of yeast species to identify genes and regulatory elements.</title>
        <authorList>
            <person name="Kellis M."/>
            <person name="Patterson N."/>
            <person name="Endrizzi M."/>
            <person name="Birren B.W."/>
            <person name="Lander E.S."/>
        </authorList>
    </citation>
    <scope>IDENTIFICATION OF PROBABLE INITIATION SITE</scope>
</reference>
<reference key="5">
    <citation type="journal article" date="2003" name="Nature">
        <title>Global analysis of protein localization in budding yeast.</title>
        <authorList>
            <person name="Huh W.-K."/>
            <person name="Falvo J.V."/>
            <person name="Gerke L.C."/>
            <person name="Carroll A.S."/>
            <person name="Howson R.W."/>
            <person name="Weissman J.S."/>
            <person name="O'Shea E.K."/>
        </authorList>
    </citation>
    <scope>SUBCELLULAR LOCATION [LARGE SCALE ANALYSIS]</scope>
</reference>
<reference key="6">
    <citation type="journal article" date="2003" name="Nature">
        <title>Global analysis of protein expression in yeast.</title>
        <authorList>
            <person name="Ghaemmaghami S."/>
            <person name="Huh W.-K."/>
            <person name="Bower K."/>
            <person name="Howson R.W."/>
            <person name="Belle A."/>
            <person name="Dephoure N."/>
            <person name="O'Shea E.K."/>
            <person name="Weissman J.S."/>
        </authorList>
    </citation>
    <scope>LEVEL OF PROTEIN EXPRESSION [LARGE SCALE ANALYSIS]</scope>
</reference>
<evidence type="ECO:0000269" key="1">
    <source>
    </source>
</evidence>
<evidence type="ECO:0000269" key="2">
    <source>
    </source>
</evidence>
<evidence type="ECO:0000269" key="3">
    <source>
    </source>
</evidence>
<evidence type="ECO:0000305" key="4"/>
<feature type="chain" id="PRO_0000128298" description="Pantoate--beta-alanine ligase">
    <location>
        <begin position="1"/>
        <end position="309"/>
    </location>
</feature>
<accession>P40459</accession>
<accession>D6VVE2</accession>
<name>PANC_YEAST</name>
<gene>
    <name type="primary">PAN6</name>
    <name type="ordered locus">YIL145C</name>
</gene>